<organism>
    <name type="scientific">Citrobacter koseri (strain ATCC BAA-895 / CDC 4225-83 / SGSC4696)</name>
    <dbReference type="NCBI Taxonomy" id="290338"/>
    <lineage>
        <taxon>Bacteria</taxon>
        <taxon>Pseudomonadati</taxon>
        <taxon>Pseudomonadota</taxon>
        <taxon>Gammaproteobacteria</taxon>
        <taxon>Enterobacterales</taxon>
        <taxon>Enterobacteriaceae</taxon>
        <taxon>Citrobacter</taxon>
    </lineage>
</organism>
<gene>
    <name evidence="1" type="primary">trpB</name>
    <name type="ordered locus">CKO_01337</name>
</gene>
<evidence type="ECO:0000255" key="1">
    <source>
        <dbReference type="HAMAP-Rule" id="MF_00133"/>
    </source>
</evidence>
<feature type="chain" id="PRO_1000018333" description="Tryptophan synthase beta chain">
    <location>
        <begin position="1"/>
        <end position="397"/>
    </location>
</feature>
<feature type="modified residue" description="N6-(pyridoxal phosphate)lysine" evidence="1">
    <location>
        <position position="87"/>
    </location>
</feature>
<keyword id="KW-0028">Amino-acid biosynthesis</keyword>
<keyword id="KW-0057">Aromatic amino acid biosynthesis</keyword>
<keyword id="KW-0456">Lyase</keyword>
<keyword id="KW-0663">Pyridoxal phosphate</keyword>
<keyword id="KW-1185">Reference proteome</keyword>
<keyword id="KW-0822">Tryptophan biosynthesis</keyword>
<comment type="function">
    <text evidence="1">The beta subunit is responsible for the synthesis of L-tryptophan from indole and L-serine.</text>
</comment>
<comment type="catalytic activity">
    <reaction evidence="1">
        <text>(1S,2R)-1-C-(indol-3-yl)glycerol 3-phosphate + L-serine = D-glyceraldehyde 3-phosphate + L-tryptophan + H2O</text>
        <dbReference type="Rhea" id="RHEA:10532"/>
        <dbReference type="ChEBI" id="CHEBI:15377"/>
        <dbReference type="ChEBI" id="CHEBI:33384"/>
        <dbReference type="ChEBI" id="CHEBI:57912"/>
        <dbReference type="ChEBI" id="CHEBI:58866"/>
        <dbReference type="ChEBI" id="CHEBI:59776"/>
        <dbReference type="EC" id="4.2.1.20"/>
    </reaction>
</comment>
<comment type="cofactor">
    <cofactor evidence="1">
        <name>pyridoxal 5'-phosphate</name>
        <dbReference type="ChEBI" id="CHEBI:597326"/>
    </cofactor>
</comment>
<comment type="pathway">
    <text evidence="1">Amino-acid biosynthesis; L-tryptophan biosynthesis; L-tryptophan from chorismate: step 5/5.</text>
</comment>
<comment type="subunit">
    <text evidence="1">Tetramer of two alpha and two beta chains.</text>
</comment>
<comment type="similarity">
    <text evidence="1">Belongs to the TrpB family.</text>
</comment>
<sequence length="397" mass="42908">MTTLLNPYFGEFGGMYVPQILMPALRQLEEAFVSAQKDPQFQAQFADLLKNYAGRPTALTKCQNITAGTKTTLYLKREDLLHGGAHKTNQVLGQALLAKRMGKTEIIAETGAGQHGVASALASALLGLKCRIYMGAKDVERQSPNVFRMRLMGAEVIPVHSGSATLKDACNEALRDWSGSYESAHYMLGTAAGPHPFPTIVREFQRMIGEETKAQILEKEGRLPDAVIACVGGGSNAIGMFADFINETSVGLIGVEPGGHGIETGEHGAPLKHGRVGIYFGMKAPMMQTEEGQIEESYSISAGLDFPSVGPQHAYLNSIGRADYVSITDDEALEAFKTLCLHEGIIPALESSHALAHALKMMRENPEKEQLLVVNLSGRGDKDIFTVHDILKARGEI</sequence>
<proteinExistence type="inferred from homology"/>
<reference key="1">
    <citation type="submission" date="2007-08" db="EMBL/GenBank/DDBJ databases">
        <authorList>
            <consortium name="The Citrobacter koseri Genome Sequencing Project"/>
            <person name="McClelland M."/>
            <person name="Sanderson E.K."/>
            <person name="Porwollik S."/>
            <person name="Spieth J."/>
            <person name="Clifton W.S."/>
            <person name="Latreille P."/>
            <person name="Courtney L."/>
            <person name="Wang C."/>
            <person name="Pepin K."/>
            <person name="Bhonagiri V."/>
            <person name="Nash W."/>
            <person name="Johnson M."/>
            <person name="Thiruvilangam P."/>
            <person name="Wilson R."/>
        </authorList>
    </citation>
    <scope>NUCLEOTIDE SEQUENCE [LARGE SCALE GENOMIC DNA]</scope>
    <source>
        <strain>ATCC BAA-895 / CDC 4225-83 / SGSC4696</strain>
    </source>
</reference>
<dbReference type="EC" id="4.2.1.20" evidence="1"/>
<dbReference type="EMBL" id="CP000822">
    <property type="protein sequence ID" value="ABV12474.1"/>
    <property type="molecule type" value="Genomic_DNA"/>
</dbReference>
<dbReference type="RefSeq" id="WP_012132217.1">
    <property type="nucleotide sequence ID" value="NC_009792.1"/>
</dbReference>
<dbReference type="SMR" id="A8AG61"/>
<dbReference type="STRING" id="290338.CKO_01337"/>
<dbReference type="GeneID" id="45135443"/>
<dbReference type="KEGG" id="cko:CKO_01337"/>
<dbReference type="HOGENOM" id="CLU_016734_3_1_6"/>
<dbReference type="OrthoDB" id="9766131at2"/>
<dbReference type="UniPathway" id="UPA00035">
    <property type="reaction ID" value="UER00044"/>
</dbReference>
<dbReference type="Proteomes" id="UP000008148">
    <property type="component" value="Chromosome"/>
</dbReference>
<dbReference type="GO" id="GO:0005737">
    <property type="term" value="C:cytoplasm"/>
    <property type="evidence" value="ECO:0007669"/>
    <property type="project" value="TreeGrafter"/>
</dbReference>
<dbReference type="GO" id="GO:0004834">
    <property type="term" value="F:tryptophan synthase activity"/>
    <property type="evidence" value="ECO:0007669"/>
    <property type="project" value="UniProtKB-UniRule"/>
</dbReference>
<dbReference type="CDD" id="cd06446">
    <property type="entry name" value="Trp-synth_B"/>
    <property type="match status" value="1"/>
</dbReference>
<dbReference type="FunFam" id="3.40.50.1100:FF:000001">
    <property type="entry name" value="Tryptophan synthase beta chain"/>
    <property type="match status" value="1"/>
</dbReference>
<dbReference type="FunFam" id="3.40.50.1100:FF:000004">
    <property type="entry name" value="Tryptophan synthase beta chain"/>
    <property type="match status" value="1"/>
</dbReference>
<dbReference type="Gene3D" id="3.40.50.1100">
    <property type="match status" value="2"/>
</dbReference>
<dbReference type="HAMAP" id="MF_00133">
    <property type="entry name" value="Trp_synth_beta"/>
    <property type="match status" value="1"/>
</dbReference>
<dbReference type="InterPro" id="IPR006653">
    <property type="entry name" value="Trp_synth_b_CS"/>
</dbReference>
<dbReference type="InterPro" id="IPR006654">
    <property type="entry name" value="Trp_synth_beta"/>
</dbReference>
<dbReference type="InterPro" id="IPR023026">
    <property type="entry name" value="Trp_synth_beta/beta-like"/>
</dbReference>
<dbReference type="InterPro" id="IPR001926">
    <property type="entry name" value="TrpB-like_PALP"/>
</dbReference>
<dbReference type="InterPro" id="IPR036052">
    <property type="entry name" value="TrpB-like_PALP_sf"/>
</dbReference>
<dbReference type="NCBIfam" id="TIGR00263">
    <property type="entry name" value="trpB"/>
    <property type="match status" value="1"/>
</dbReference>
<dbReference type="PANTHER" id="PTHR48077:SF3">
    <property type="entry name" value="TRYPTOPHAN SYNTHASE"/>
    <property type="match status" value="1"/>
</dbReference>
<dbReference type="PANTHER" id="PTHR48077">
    <property type="entry name" value="TRYPTOPHAN SYNTHASE-RELATED"/>
    <property type="match status" value="1"/>
</dbReference>
<dbReference type="Pfam" id="PF00291">
    <property type="entry name" value="PALP"/>
    <property type="match status" value="1"/>
</dbReference>
<dbReference type="PIRSF" id="PIRSF001413">
    <property type="entry name" value="Trp_syn_beta"/>
    <property type="match status" value="1"/>
</dbReference>
<dbReference type="SUPFAM" id="SSF53686">
    <property type="entry name" value="Tryptophan synthase beta subunit-like PLP-dependent enzymes"/>
    <property type="match status" value="1"/>
</dbReference>
<dbReference type="PROSITE" id="PS00168">
    <property type="entry name" value="TRP_SYNTHASE_BETA"/>
    <property type="match status" value="1"/>
</dbReference>
<name>TRPB_CITK8</name>
<protein>
    <recommendedName>
        <fullName evidence="1">Tryptophan synthase beta chain</fullName>
        <ecNumber evidence="1">4.2.1.20</ecNumber>
    </recommendedName>
</protein>
<accession>A8AG61</accession>